<organism>
    <name type="scientific">Bacteroides fragilis (strain YCH46)</name>
    <dbReference type="NCBI Taxonomy" id="295405"/>
    <lineage>
        <taxon>Bacteria</taxon>
        <taxon>Pseudomonadati</taxon>
        <taxon>Bacteroidota</taxon>
        <taxon>Bacteroidia</taxon>
        <taxon>Bacteroidales</taxon>
        <taxon>Bacteroidaceae</taxon>
        <taxon>Bacteroides</taxon>
    </lineage>
</organism>
<protein>
    <recommendedName>
        <fullName>Superoxide dismutase [Fe]</fullName>
        <ecNumber>1.15.1.1</ecNumber>
    </recommendedName>
</protein>
<name>SODF_BACFR</name>
<keyword id="KW-0002">3D-structure</keyword>
<keyword id="KW-0408">Iron</keyword>
<keyword id="KW-0479">Metal-binding</keyword>
<keyword id="KW-0560">Oxidoreductase</keyword>
<feature type="chain" id="PRO_0000159973" description="Superoxide dismutase [Fe]">
    <location>
        <begin position="1"/>
        <end position="193"/>
    </location>
</feature>
<feature type="binding site" evidence="1">
    <location>
        <position position="27"/>
    </location>
    <ligand>
        <name>Fe cation</name>
        <dbReference type="ChEBI" id="CHEBI:24875"/>
    </ligand>
</feature>
<feature type="binding site" evidence="1">
    <location>
        <position position="75"/>
    </location>
    <ligand>
        <name>Fe cation</name>
        <dbReference type="ChEBI" id="CHEBI:24875"/>
    </ligand>
</feature>
<feature type="binding site" evidence="1">
    <location>
        <position position="159"/>
    </location>
    <ligand>
        <name>Fe cation</name>
        <dbReference type="ChEBI" id="CHEBI:24875"/>
    </ligand>
</feature>
<feature type="binding site" evidence="1">
    <location>
        <position position="163"/>
    </location>
    <ligand>
        <name>Fe cation</name>
        <dbReference type="ChEBI" id="CHEBI:24875"/>
    </ligand>
</feature>
<feature type="sequence conflict" description="In Ref. 2; BAA02902." evidence="2" ref="2">
    <original>R</original>
    <variation>L</variation>
    <location>
        <position position="172"/>
    </location>
</feature>
<feature type="sequence conflict" description="In Ref. 1; AAA22910." evidence="2" ref="1">
    <original>H</original>
    <variation>D</variation>
    <location>
        <position position="176"/>
    </location>
</feature>
<feature type="turn" evidence="3">
    <location>
        <begin position="12"/>
        <end position="18"/>
    </location>
</feature>
<feature type="helix" evidence="3">
    <location>
        <begin position="21"/>
        <end position="27"/>
    </location>
</feature>
<feature type="turn" evidence="3">
    <location>
        <begin position="28"/>
        <end position="30"/>
    </location>
</feature>
<feature type="helix" evidence="3">
    <location>
        <begin position="31"/>
        <end position="42"/>
    </location>
</feature>
<feature type="turn" evidence="3">
    <location>
        <begin position="47"/>
        <end position="50"/>
    </location>
</feature>
<feature type="helix" evidence="3">
    <location>
        <begin position="53"/>
        <end position="59"/>
    </location>
</feature>
<feature type="helix" evidence="3">
    <location>
        <begin position="64"/>
        <end position="80"/>
    </location>
</feature>
<feature type="helix" evidence="3">
    <location>
        <begin position="93"/>
        <end position="103"/>
    </location>
</feature>
<feature type="helix" evidence="3">
    <location>
        <begin position="106"/>
        <end position="119"/>
    </location>
</feature>
<feature type="strand" evidence="3">
    <location>
        <begin position="122"/>
        <end position="130"/>
    </location>
</feature>
<feature type="strand" evidence="3">
    <location>
        <begin position="136"/>
        <end position="142"/>
    </location>
</feature>
<feature type="helix" evidence="3">
    <location>
        <begin position="147"/>
        <end position="150"/>
    </location>
</feature>
<feature type="strand" evidence="3">
    <location>
        <begin position="153"/>
        <end position="159"/>
    </location>
</feature>
<feature type="helix" evidence="3">
    <location>
        <begin position="162"/>
        <end position="164"/>
    </location>
</feature>
<feature type="helix" evidence="3">
    <location>
        <begin position="166"/>
        <end position="169"/>
    </location>
</feature>
<feature type="helix" evidence="3">
    <location>
        <begin position="173"/>
        <end position="180"/>
    </location>
</feature>
<feature type="helix" evidence="3">
    <location>
        <begin position="181"/>
        <end position="183"/>
    </location>
</feature>
<feature type="helix" evidence="3">
    <location>
        <begin position="186"/>
        <end position="190"/>
    </location>
</feature>
<gene>
    <name type="primary">sodB</name>
    <name type="synonym">sod</name>
    <name type="ordered locus">BF2527</name>
</gene>
<sequence>MTYEMPKLPYANNALEPVISQQTIDYHYGKHLQTYVNNLNSLVPGTEYEGKTVEAIVASAPDGAIFNNAGQVLNHTLYFLQFAPKPAKNEPAGKLGEAIKRDFGSFENFKKEFNAASVGLFGSGWAWLSVDKDGKLHITKEPNGSNPVRAGLKPLLGFDVWEHAYYLDYQNRRADHVNKLWEIIDWDVVEKRL</sequence>
<dbReference type="EC" id="1.15.1.1"/>
<dbReference type="EMBL" id="M96560">
    <property type="protein sequence ID" value="AAA22910.1"/>
    <property type="molecule type" value="Genomic_DNA"/>
</dbReference>
<dbReference type="EMBL" id="D13756">
    <property type="protein sequence ID" value="BAA02902.1"/>
    <property type="molecule type" value="Genomic_DNA"/>
</dbReference>
<dbReference type="EMBL" id="AP006841">
    <property type="protein sequence ID" value="BAD49276.1"/>
    <property type="status" value="ALT_INIT"/>
    <property type="molecule type" value="Genomic_DNA"/>
</dbReference>
<dbReference type="RefSeq" id="YP_099810.1">
    <property type="nucleotide sequence ID" value="NC_006347.1"/>
</dbReference>
<dbReference type="PDB" id="8AVL">
    <property type="method" value="X-ray"/>
    <property type="resolution" value="1.60 A"/>
    <property type="chains" value="A/B/C/D/E/F/G/H=3-193"/>
</dbReference>
<dbReference type="PDB" id="8AVM">
    <property type="method" value="X-ray"/>
    <property type="resolution" value="2.00 A"/>
    <property type="chains" value="A/B/C/D/E/F=3-193"/>
</dbReference>
<dbReference type="PDBsum" id="8AVL"/>
<dbReference type="PDBsum" id="8AVM"/>
<dbReference type="SMR" id="P53638"/>
<dbReference type="STRING" id="295405.BF2527"/>
<dbReference type="KEGG" id="bfr:BF2527"/>
<dbReference type="PATRIC" id="fig|295405.11.peg.2433"/>
<dbReference type="HOGENOM" id="CLU_031625_0_0_10"/>
<dbReference type="OrthoDB" id="9803125at2"/>
<dbReference type="Proteomes" id="UP000002197">
    <property type="component" value="Chromosome"/>
</dbReference>
<dbReference type="GO" id="GO:0005737">
    <property type="term" value="C:cytoplasm"/>
    <property type="evidence" value="ECO:0007669"/>
    <property type="project" value="TreeGrafter"/>
</dbReference>
<dbReference type="GO" id="GO:0046872">
    <property type="term" value="F:metal ion binding"/>
    <property type="evidence" value="ECO:0007669"/>
    <property type="project" value="UniProtKB-KW"/>
</dbReference>
<dbReference type="GO" id="GO:0004784">
    <property type="term" value="F:superoxide dismutase activity"/>
    <property type="evidence" value="ECO:0007669"/>
    <property type="project" value="UniProtKB-EC"/>
</dbReference>
<dbReference type="FunFam" id="1.10.287.990:FF:000003">
    <property type="entry name" value="Superoxide dismutase"/>
    <property type="match status" value="1"/>
</dbReference>
<dbReference type="FunFam" id="3.55.40.20:FF:000001">
    <property type="entry name" value="Superoxide dismutase"/>
    <property type="match status" value="1"/>
</dbReference>
<dbReference type="Gene3D" id="1.10.287.990">
    <property type="entry name" value="Fe,Mn superoxide dismutase (SOD) domain"/>
    <property type="match status" value="1"/>
</dbReference>
<dbReference type="Gene3D" id="3.55.40.20">
    <property type="entry name" value="Iron/manganese superoxide dismutase, C-terminal domain"/>
    <property type="match status" value="1"/>
</dbReference>
<dbReference type="InterPro" id="IPR001189">
    <property type="entry name" value="Mn/Fe_SOD"/>
</dbReference>
<dbReference type="InterPro" id="IPR019833">
    <property type="entry name" value="Mn/Fe_SOD_BS"/>
</dbReference>
<dbReference type="InterPro" id="IPR019832">
    <property type="entry name" value="Mn/Fe_SOD_C"/>
</dbReference>
<dbReference type="InterPro" id="IPR019831">
    <property type="entry name" value="Mn/Fe_SOD_N"/>
</dbReference>
<dbReference type="InterPro" id="IPR036324">
    <property type="entry name" value="Mn/Fe_SOD_N_sf"/>
</dbReference>
<dbReference type="InterPro" id="IPR036314">
    <property type="entry name" value="SOD_C_sf"/>
</dbReference>
<dbReference type="PANTHER" id="PTHR43595">
    <property type="entry name" value="37S RIBOSOMAL PROTEIN S26, MITOCHONDRIAL"/>
    <property type="match status" value="1"/>
</dbReference>
<dbReference type="PANTHER" id="PTHR43595:SF2">
    <property type="entry name" value="SMALL RIBOSOMAL SUBUNIT PROTEIN MS42"/>
    <property type="match status" value="1"/>
</dbReference>
<dbReference type="Pfam" id="PF02777">
    <property type="entry name" value="Sod_Fe_C"/>
    <property type="match status" value="1"/>
</dbReference>
<dbReference type="Pfam" id="PF00081">
    <property type="entry name" value="Sod_Fe_N"/>
    <property type="match status" value="1"/>
</dbReference>
<dbReference type="PIRSF" id="PIRSF000349">
    <property type="entry name" value="SODismutase"/>
    <property type="match status" value="1"/>
</dbReference>
<dbReference type="PRINTS" id="PR01703">
    <property type="entry name" value="MNSODISMTASE"/>
</dbReference>
<dbReference type="SUPFAM" id="SSF54719">
    <property type="entry name" value="Fe,Mn superoxide dismutase (SOD), C-terminal domain"/>
    <property type="match status" value="1"/>
</dbReference>
<dbReference type="SUPFAM" id="SSF46609">
    <property type="entry name" value="Fe,Mn superoxide dismutase (SOD), N-terminal domain"/>
    <property type="match status" value="1"/>
</dbReference>
<dbReference type="PROSITE" id="PS00088">
    <property type="entry name" value="SOD_MN"/>
    <property type="match status" value="1"/>
</dbReference>
<proteinExistence type="evidence at protein level"/>
<evidence type="ECO:0000250" key="1"/>
<evidence type="ECO:0000305" key="2"/>
<evidence type="ECO:0007829" key="3">
    <source>
        <dbReference type="PDB" id="8AVL"/>
    </source>
</evidence>
<reference key="1">
    <citation type="submission" date="1992-08" db="EMBL/GenBank/DDBJ databases">
        <authorList>
            <person name="Lai K.N."/>
            <person name="Gregory E.M."/>
        </authorList>
    </citation>
    <scope>NUCLEOTIDE SEQUENCE [GENOMIC DNA]</scope>
</reference>
<reference key="2">
    <citation type="submission" date="1994-09" db="EMBL/GenBank/DDBJ databases">
        <authorList>
            <person name="Nakayama K."/>
            <person name="Sasaki A."/>
        </authorList>
    </citation>
    <scope>NUCLEOTIDE SEQUENCE [GENOMIC DNA]</scope>
</reference>
<reference key="3">
    <citation type="journal article" date="2004" name="Proc. Natl. Acad. Sci. U.S.A.">
        <title>Genomic analysis of Bacteroides fragilis reveals extensive DNA inversions regulating cell surface adaptation.</title>
        <authorList>
            <person name="Kuwahara T."/>
            <person name="Yamashita A."/>
            <person name="Hirakawa H."/>
            <person name="Nakayama H."/>
            <person name="Toh H."/>
            <person name="Okada N."/>
            <person name="Kuhara S."/>
            <person name="Hattori M."/>
            <person name="Hayashi T."/>
            <person name="Ohnishi Y."/>
        </authorList>
    </citation>
    <scope>NUCLEOTIDE SEQUENCE [LARGE SCALE GENOMIC DNA]</scope>
    <source>
        <strain>YCH46</strain>
    </source>
</reference>
<accession>P53638</accession>
<accession>Q64TA3</accession>
<comment type="function">
    <text>Destroys superoxide anion radicals which are normally produced within the cells and which are toxic to biological systems.</text>
</comment>
<comment type="catalytic activity">
    <reaction>
        <text>2 superoxide + 2 H(+) = H2O2 + O2</text>
        <dbReference type="Rhea" id="RHEA:20696"/>
        <dbReference type="ChEBI" id="CHEBI:15378"/>
        <dbReference type="ChEBI" id="CHEBI:15379"/>
        <dbReference type="ChEBI" id="CHEBI:16240"/>
        <dbReference type="ChEBI" id="CHEBI:18421"/>
        <dbReference type="EC" id="1.15.1.1"/>
    </reaction>
</comment>
<comment type="cofactor">
    <cofactor evidence="1">
        <name>Fe cation</name>
        <dbReference type="ChEBI" id="CHEBI:24875"/>
    </cofactor>
    <text evidence="1">Binds 1 Fe cation per subunit.</text>
</comment>
<comment type="subunit">
    <text evidence="1">Homodimer.</text>
</comment>
<comment type="similarity">
    <text evidence="2">Belongs to the iron/manganese superoxide dismutase family.</text>
</comment>
<comment type="sequence caution" evidence="2">
    <conflict type="erroneous initiation">
        <sequence resource="EMBL-CDS" id="BAD49276"/>
    </conflict>
</comment>